<accession>Q2FRU9</accession>
<gene>
    <name evidence="1" type="primary">cofD</name>
    <name type="ordered locus">Mhun_2444</name>
</gene>
<evidence type="ECO:0000255" key="1">
    <source>
        <dbReference type="HAMAP-Rule" id="MF_01257"/>
    </source>
</evidence>
<comment type="function">
    <text evidence="1">Catalyzes the transfer of the 2-phospholactate moiety from (2S)-lactyl-2-diphospho-5'-guanosine to 7,8-didemethyl-8-hydroxy-5-deazariboflavin (FO) with the formation of oxidized coenzyme F420-0 and GMP.</text>
</comment>
<comment type="catalytic activity">
    <reaction evidence="1">
        <text>(2S)-lactyl-2-diphospho-5'-guanosine + 7,8-didemethyl-8-hydroxy-5-deazariboflavin = oxidized coenzyme F420-0 + GMP + H(+)</text>
        <dbReference type="Rhea" id="RHEA:63444"/>
        <dbReference type="ChEBI" id="CHEBI:15378"/>
        <dbReference type="ChEBI" id="CHEBI:58115"/>
        <dbReference type="ChEBI" id="CHEBI:59435"/>
        <dbReference type="ChEBI" id="CHEBI:59904"/>
        <dbReference type="ChEBI" id="CHEBI:59907"/>
        <dbReference type="EC" id="2.7.8.28"/>
    </reaction>
</comment>
<comment type="cofactor">
    <cofactor evidence="1">
        <name>Mg(2+)</name>
        <dbReference type="ChEBI" id="CHEBI:18420"/>
    </cofactor>
</comment>
<comment type="pathway">
    <text evidence="1">Cofactor biosynthesis; coenzyme F420 biosynthesis.</text>
</comment>
<comment type="subunit">
    <text evidence="1">Homodimer.</text>
</comment>
<comment type="similarity">
    <text evidence="1">Belongs to the CofD family.</text>
</comment>
<organism>
    <name type="scientific">Methanospirillum hungatei JF-1 (strain ATCC 27890 / DSM 864 / NBRC 100397 / JF-1)</name>
    <dbReference type="NCBI Taxonomy" id="323259"/>
    <lineage>
        <taxon>Archaea</taxon>
        <taxon>Methanobacteriati</taxon>
        <taxon>Methanobacteriota</taxon>
        <taxon>Stenosarchaea group</taxon>
        <taxon>Methanomicrobia</taxon>
        <taxon>Methanomicrobiales</taxon>
        <taxon>Methanospirillaceae</taxon>
        <taxon>Methanospirillum</taxon>
    </lineage>
</organism>
<protein>
    <recommendedName>
        <fullName evidence="1">2-phospho-L-lactate transferase</fullName>
        <ecNumber evidence="1">2.7.8.28</ecNumber>
    </recommendedName>
</protein>
<sequence length="297" mass="32662">MITFLSGGTGTPKLLEGARNMLPDSDISVIVNTGEDIWYQGGHISPDVDTVMYLFAGLLNTDTWWGVRGDSFLTHDVLKTLLPASYMSIGDKDRAVHIARAEWLKKGMTLTRVTQQLCSHFGVSTTILPMSDSPYTTYVRTAKGDIHFQEYWVRYRGNTDICAVLHVPDEQPPATPEVIDAIRKAEVVIIGPSNPVTSILPILSCTGVREELAQKKVIAISPFIGEGPVSGPAAQLMKTMKYPADSTGVRALYADLVDVFIQDERDTAQVPGSVRLDTLMKTPAIAERLMREILTRL</sequence>
<reference key="1">
    <citation type="journal article" date="2016" name="Stand. Genomic Sci.">
        <title>Complete genome sequence of Methanospirillum hungatei type strain JF1.</title>
        <authorList>
            <person name="Gunsalus R.P."/>
            <person name="Cook L.E."/>
            <person name="Crable B."/>
            <person name="Rohlin L."/>
            <person name="McDonald E."/>
            <person name="Mouttaki H."/>
            <person name="Sieber J.R."/>
            <person name="Poweleit N."/>
            <person name="Zhou H."/>
            <person name="Lapidus A.L."/>
            <person name="Daligault H.E."/>
            <person name="Land M."/>
            <person name="Gilna P."/>
            <person name="Ivanova N."/>
            <person name="Kyrpides N."/>
            <person name="Culley D.E."/>
            <person name="McInerney M.J."/>
        </authorList>
    </citation>
    <scope>NUCLEOTIDE SEQUENCE [LARGE SCALE GENOMIC DNA]</scope>
    <source>
        <strain>ATCC 27890 / DSM 864 / NBRC 100397 / JF-1</strain>
    </source>
</reference>
<proteinExistence type="inferred from homology"/>
<dbReference type="EC" id="2.7.8.28" evidence="1"/>
<dbReference type="EMBL" id="CP000254">
    <property type="protein sequence ID" value="ABD42145.1"/>
    <property type="molecule type" value="Genomic_DNA"/>
</dbReference>
<dbReference type="RefSeq" id="WP_011449403.1">
    <property type="nucleotide sequence ID" value="NC_007796.1"/>
</dbReference>
<dbReference type="SMR" id="Q2FRU9"/>
<dbReference type="FunCoup" id="Q2FRU9">
    <property type="interactions" value="88"/>
</dbReference>
<dbReference type="STRING" id="323259.Mhun_2444"/>
<dbReference type="EnsemblBacteria" id="ABD42145">
    <property type="protein sequence ID" value="ABD42145"/>
    <property type="gene ID" value="Mhun_2444"/>
</dbReference>
<dbReference type="GeneID" id="3922432"/>
<dbReference type="KEGG" id="mhu:Mhun_2444"/>
<dbReference type="eggNOG" id="arCOG04395">
    <property type="taxonomic scope" value="Archaea"/>
</dbReference>
<dbReference type="HOGENOM" id="CLU_055795_1_0_2"/>
<dbReference type="InParanoid" id="Q2FRU9"/>
<dbReference type="OrthoDB" id="59563at2157"/>
<dbReference type="UniPathway" id="UPA00071"/>
<dbReference type="Proteomes" id="UP000001941">
    <property type="component" value="Chromosome"/>
</dbReference>
<dbReference type="GO" id="GO:0043743">
    <property type="term" value="F:LPPG:FO 2-phospho-L-lactate transferase activity"/>
    <property type="evidence" value="ECO:0007669"/>
    <property type="project" value="UniProtKB-EC"/>
</dbReference>
<dbReference type="GO" id="GO:0000287">
    <property type="term" value="F:magnesium ion binding"/>
    <property type="evidence" value="ECO:0007669"/>
    <property type="project" value="InterPro"/>
</dbReference>
<dbReference type="GO" id="GO:0052645">
    <property type="term" value="P:F420-0 metabolic process"/>
    <property type="evidence" value="ECO:0007669"/>
    <property type="project" value="UniProtKB-UniRule"/>
</dbReference>
<dbReference type="CDD" id="cd07186">
    <property type="entry name" value="CofD_like"/>
    <property type="match status" value="1"/>
</dbReference>
<dbReference type="Gene3D" id="1.10.8.240">
    <property type="entry name" value="CofD-like domain"/>
    <property type="match status" value="1"/>
</dbReference>
<dbReference type="Gene3D" id="3.40.50.10680">
    <property type="entry name" value="CofD-like domains"/>
    <property type="match status" value="1"/>
</dbReference>
<dbReference type="HAMAP" id="MF_01257">
    <property type="entry name" value="CofD"/>
    <property type="match status" value="1"/>
</dbReference>
<dbReference type="InterPro" id="IPR002882">
    <property type="entry name" value="CofD"/>
</dbReference>
<dbReference type="InterPro" id="IPR038136">
    <property type="entry name" value="CofD-like_dom_sf"/>
</dbReference>
<dbReference type="InterPro" id="IPR010115">
    <property type="entry name" value="FbiA/CofD"/>
</dbReference>
<dbReference type="NCBIfam" id="TIGR01819">
    <property type="entry name" value="F420_cofD"/>
    <property type="match status" value="1"/>
</dbReference>
<dbReference type="PANTHER" id="PTHR43007">
    <property type="entry name" value="2-PHOSPHO-L-LACTATE TRANSFERASE"/>
    <property type="match status" value="1"/>
</dbReference>
<dbReference type="PANTHER" id="PTHR43007:SF1">
    <property type="entry name" value="2-PHOSPHO-L-LACTATE TRANSFERASE"/>
    <property type="match status" value="1"/>
</dbReference>
<dbReference type="Pfam" id="PF01933">
    <property type="entry name" value="CofD"/>
    <property type="match status" value="1"/>
</dbReference>
<dbReference type="SUPFAM" id="SSF142338">
    <property type="entry name" value="CofD-like"/>
    <property type="match status" value="1"/>
</dbReference>
<keyword id="KW-0460">Magnesium</keyword>
<keyword id="KW-1185">Reference proteome</keyword>
<keyword id="KW-0808">Transferase</keyword>
<name>COFD_METHJ</name>
<feature type="chain" id="PRO_1000165108" description="2-phospho-L-lactate transferase">
    <location>
        <begin position="1"/>
        <end position="297"/>
    </location>
</feature>
<feature type="binding site" evidence="1">
    <location>
        <position position="49"/>
    </location>
    <ligand>
        <name>7,8-didemethyl-8-hydroxy-5-deazariboflavin</name>
        <dbReference type="ChEBI" id="CHEBI:59904"/>
    </ligand>
</feature>